<proteinExistence type="evidence at transcript level"/>
<accession>Q5PSV5</accession>
<organism>
    <name type="scientific">Meleagris gallopavo</name>
    <name type="common">Wild turkey</name>
    <dbReference type="NCBI Taxonomy" id="9103"/>
    <lineage>
        <taxon>Eukaryota</taxon>
        <taxon>Metazoa</taxon>
        <taxon>Chordata</taxon>
        <taxon>Craniata</taxon>
        <taxon>Vertebrata</taxon>
        <taxon>Euteleostomi</taxon>
        <taxon>Archelosauria</taxon>
        <taxon>Archosauria</taxon>
        <taxon>Dinosauria</taxon>
        <taxon>Saurischia</taxon>
        <taxon>Theropoda</taxon>
        <taxon>Coelurosauria</taxon>
        <taxon>Aves</taxon>
        <taxon>Neognathae</taxon>
        <taxon>Galloanserae</taxon>
        <taxon>Galliformes</taxon>
        <taxon>Phasianidae</taxon>
        <taxon>Meleagridinae</taxon>
        <taxon>Meleagris</taxon>
    </lineage>
</organism>
<evidence type="ECO:0000250" key="1"/>
<evidence type="ECO:0000255" key="2"/>
<evidence type="ECO:0000269" key="3">
    <source>
    </source>
</evidence>
<evidence type="ECO:0000305" key="4"/>
<sequence length="131" mass="14389">MAGIKALVGLSFSGAIGLTFLMLGCALEYYGVYWPMFVLIFYFICPIPHFIARRVSDDSDAASSACRELAYFFTTGIVVSAFGFPIILARVEAIKWGACGLVLAGNAVIFLTILGFFLVFGRGDDFSWEQW</sequence>
<gene>
    <name type="primary">LEPROT</name>
    <name type="synonym">LEPR-GRP</name>
</gene>
<comment type="function">
    <text evidence="1">Involved in protein trafficking. May be involved in the down-regulation of membrane protein levels (By similarity).</text>
</comment>
<comment type="subcellular location">
    <subcellularLocation>
        <location evidence="1">Golgi apparatus membrane</location>
        <topology evidence="1">Multi-pass membrane protein</topology>
    </subcellularLocation>
    <subcellularLocation>
        <location evidence="1">Endosome membrane</location>
    </subcellularLocation>
</comment>
<comment type="tissue specificity">
    <text evidence="3">Widely expressed, including in liver, duodenum, kidney, pancreas, lung, spleen and brain.</text>
</comment>
<comment type="similarity">
    <text evidence="4">Belongs to the OB-RGRP/VPS55 family.</text>
</comment>
<keyword id="KW-0967">Endosome</keyword>
<keyword id="KW-0333">Golgi apparatus</keyword>
<keyword id="KW-0472">Membrane</keyword>
<keyword id="KW-1185">Reference proteome</keyword>
<keyword id="KW-0812">Transmembrane</keyword>
<keyword id="KW-1133">Transmembrane helix</keyword>
<feature type="chain" id="PRO_0000397881" description="Leptin receptor gene-related protein">
    <location>
        <begin position="1"/>
        <end position="131"/>
    </location>
</feature>
<feature type="transmembrane region" description="Helical" evidence="2">
    <location>
        <begin position="7"/>
        <end position="27"/>
    </location>
</feature>
<feature type="transmembrane region" description="Helical" evidence="2">
    <location>
        <begin position="32"/>
        <end position="52"/>
    </location>
</feature>
<feature type="transmembrane region" description="Helical" evidence="2">
    <location>
        <begin position="69"/>
        <end position="89"/>
    </location>
</feature>
<feature type="transmembrane region" description="Helical" evidence="2">
    <location>
        <begin position="100"/>
        <end position="120"/>
    </location>
</feature>
<name>OBRG_MELGA</name>
<reference key="1">
    <citation type="journal article" date="2003" name="Comp. Biochem. Physiol.">
        <title>Molecular cloning and expression of the turkey leptin receptor gene.</title>
        <authorList>
            <person name="Richards M.P."/>
            <person name="Poch S.M."/>
        </authorList>
    </citation>
    <scope>NUCLEOTIDE SEQUENCE [MRNA]</scope>
    <scope>TISSUE SPECIFICITY</scope>
</reference>
<protein>
    <recommendedName>
        <fullName>Leptin receptor gene-related protein</fullName>
    </recommendedName>
    <alternativeName>
        <fullName>Endospanin-1</fullName>
    </alternativeName>
    <alternativeName>
        <fullName>OB-R gene-related protein</fullName>
        <shortName>OB-RGRP</shortName>
    </alternativeName>
</protein>
<dbReference type="EMBL" id="AY826977">
    <property type="protein sequence ID" value="AAV80477.1"/>
    <property type="molecule type" value="mRNA"/>
</dbReference>
<dbReference type="RefSeq" id="NP_001290101.1">
    <property type="nucleotide sequence ID" value="NM_001303172.1"/>
</dbReference>
<dbReference type="FunCoup" id="Q5PSV5">
    <property type="interactions" value="465"/>
</dbReference>
<dbReference type="Ensembl" id="ENSMGAT00000013333.2">
    <property type="protein sequence ID" value="ENSMGAP00000012441.1"/>
    <property type="gene ID" value="ENSMGAG00000011858.2"/>
</dbReference>
<dbReference type="GeneID" id="100303675"/>
<dbReference type="KEGG" id="mgp:100303675"/>
<dbReference type="CTD" id="54741"/>
<dbReference type="GeneTree" id="ENSGT00390000006503"/>
<dbReference type="HOGENOM" id="CLU_134810_2_2_1"/>
<dbReference type="InParanoid" id="Q5PSV5"/>
<dbReference type="OMA" id="RSHVDMT"/>
<dbReference type="OrthoDB" id="11167at1549675"/>
<dbReference type="TreeFam" id="TF313689"/>
<dbReference type="Proteomes" id="UP000001645">
    <property type="component" value="Chromosome 10"/>
</dbReference>
<dbReference type="Bgee" id="ENSMGAG00000011858">
    <property type="expression patterns" value="Expressed in testis and 17 other cell types or tissues"/>
</dbReference>
<dbReference type="GO" id="GO:0010008">
    <property type="term" value="C:endosome membrane"/>
    <property type="evidence" value="ECO:0007669"/>
    <property type="project" value="UniProtKB-SubCell"/>
</dbReference>
<dbReference type="GO" id="GO:0000139">
    <property type="term" value="C:Golgi membrane"/>
    <property type="evidence" value="ECO:0007669"/>
    <property type="project" value="UniProtKB-SubCell"/>
</dbReference>
<dbReference type="GO" id="GO:0032511">
    <property type="term" value="P:late endosome to vacuole transport via multivesicular body sorting pathway"/>
    <property type="evidence" value="ECO:0007669"/>
    <property type="project" value="TreeGrafter"/>
</dbReference>
<dbReference type="GO" id="GO:0060400">
    <property type="term" value="P:negative regulation of growth hormone receptor signaling pathway"/>
    <property type="evidence" value="ECO:0007669"/>
    <property type="project" value="TreeGrafter"/>
</dbReference>
<dbReference type="InterPro" id="IPR007262">
    <property type="entry name" value="Vps55/LEPROT"/>
</dbReference>
<dbReference type="PANTHER" id="PTHR12050:SF3">
    <property type="entry name" value="LEPTIN RECEPTOR GENE-RELATED PROTEIN"/>
    <property type="match status" value="1"/>
</dbReference>
<dbReference type="PANTHER" id="PTHR12050">
    <property type="entry name" value="LEPTIN RECEPTOR-RELATED"/>
    <property type="match status" value="1"/>
</dbReference>
<dbReference type="Pfam" id="PF04133">
    <property type="entry name" value="Vps55"/>
    <property type="match status" value="1"/>
</dbReference>